<name>HIS3_RHOPA</name>
<comment type="function">
    <text evidence="1">Catalyzes the hydrolysis of the adenine ring of phosphoribosyl-AMP.</text>
</comment>
<comment type="catalytic activity">
    <reaction evidence="1">
        <text>1-(5-phospho-beta-D-ribosyl)-5'-AMP + H2O = 1-(5-phospho-beta-D-ribosyl)-5-[(5-phospho-beta-D-ribosylamino)methylideneamino]imidazole-4-carboxamide</text>
        <dbReference type="Rhea" id="RHEA:20049"/>
        <dbReference type="ChEBI" id="CHEBI:15377"/>
        <dbReference type="ChEBI" id="CHEBI:58435"/>
        <dbReference type="ChEBI" id="CHEBI:59457"/>
        <dbReference type="EC" id="3.5.4.19"/>
    </reaction>
</comment>
<comment type="cofactor">
    <cofactor evidence="1">
        <name>Mg(2+)</name>
        <dbReference type="ChEBI" id="CHEBI:18420"/>
    </cofactor>
    <text evidence="1">Binds 1 Mg(2+) ion per subunit.</text>
</comment>
<comment type="cofactor">
    <cofactor evidence="1">
        <name>Zn(2+)</name>
        <dbReference type="ChEBI" id="CHEBI:29105"/>
    </cofactor>
    <text evidence="1">Binds 1 zinc ion per subunit.</text>
</comment>
<comment type="pathway">
    <text evidence="1">Amino-acid biosynthesis; L-histidine biosynthesis; L-histidine from 5-phospho-alpha-D-ribose 1-diphosphate: step 3/9.</text>
</comment>
<comment type="subunit">
    <text evidence="1">Homodimer.</text>
</comment>
<comment type="subcellular location">
    <subcellularLocation>
        <location evidence="1">Cytoplasm</location>
    </subcellularLocation>
</comment>
<comment type="similarity">
    <text evidence="1">Belongs to the PRA-CH family.</text>
</comment>
<proteinExistence type="inferred from homology"/>
<feature type="chain" id="PRO_0000136498" description="Phosphoribosyl-AMP cyclohydrolase">
    <location>
        <begin position="1"/>
        <end position="151"/>
    </location>
</feature>
<feature type="binding site" evidence="1">
    <location>
        <position position="94"/>
    </location>
    <ligand>
        <name>Mg(2+)</name>
        <dbReference type="ChEBI" id="CHEBI:18420"/>
    </ligand>
</feature>
<feature type="binding site" evidence="1">
    <location>
        <position position="95"/>
    </location>
    <ligand>
        <name>Zn(2+)</name>
        <dbReference type="ChEBI" id="CHEBI:29105"/>
        <note>ligand shared between dimeric partners</note>
    </ligand>
</feature>
<feature type="binding site" evidence="1">
    <location>
        <position position="96"/>
    </location>
    <ligand>
        <name>Mg(2+)</name>
        <dbReference type="ChEBI" id="CHEBI:18420"/>
    </ligand>
</feature>
<feature type="binding site" evidence="1">
    <location>
        <position position="98"/>
    </location>
    <ligand>
        <name>Mg(2+)</name>
        <dbReference type="ChEBI" id="CHEBI:18420"/>
    </ligand>
</feature>
<feature type="binding site" evidence="1">
    <location>
        <position position="112"/>
    </location>
    <ligand>
        <name>Zn(2+)</name>
        <dbReference type="ChEBI" id="CHEBI:29105"/>
        <note>ligand shared between dimeric partners</note>
    </ligand>
</feature>
<feature type="binding site" evidence="1">
    <location>
        <position position="119"/>
    </location>
    <ligand>
        <name>Zn(2+)</name>
        <dbReference type="ChEBI" id="CHEBI:29105"/>
        <note>ligand shared between dimeric partners</note>
    </ligand>
</feature>
<protein>
    <recommendedName>
        <fullName evidence="1">Phosphoribosyl-AMP cyclohydrolase</fullName>
        <shortName evidence="1">PRA-CH</shortName>
        <ecNumber evidence="1">3.5.4.19</ecNumber>
    </recommendedName>
</protein>
<dbReference type="EC" id="3.5.4.19" evidence="1"/>
<dbReference type="EMBL" id="BX572603">
    <property type="protein sequence ID" value="CAE28831.1"/>
    <property type="molecule type" value="Genomic_DNA"/>
</dbReference>
<dbReference type="RefSeq" id="WP_011158932.1">
    <property type="nucleotide sequence ID" value="NZ_CP116810.1"/>
</dbReference>
<dbReference type="SMR" id="P60544"/>
<dbReference type="STRING" id="258594.RPA3390"/>
<dbReference type="GeneID" id="66894480"/>
<dbReference type="eggNOG" id="COG0139">
    <property type="taxonomic scope" value="Bacteria"/>
</dbReference>
<dbReference type="HOGENOM" id="CLU_048577_5_0_5"/>
<dbReference type="PhylomeDB" id="P60544"/>
<dbReference type="UniPathway" id="UPA00031">
    <property type="reaction ID" value="UER00008"/>
</dbReference>
<dbReference type="GO" id="GO:0005737">
    <property type="term" value="C:cytoplasm"/>
    <property type="evidence" value="ECO:0007669"/>
    <property type="project" value="UniProtKB-SubCell"/>
</dbReference>
<dbReference type="GO" id="GO:0000287">
    <property type="term" value="F:magnesium ion binding"/>
    <property type="evidence" value="ECO:0007669"/>
    <property type="project" value="UniProtKB-UniRule"/>
</dbReference>
<dbReference type="GO" id="GO:0004635">
    <property type="term" value="F:phosphoribosyl-AMP cyclohydrolase activity"/>
    <property type="evidence" value="ECO:0007669"/>
    <property type="project" value="UniProtKB-UniRule"/>
</dbReference>
<dbReference type="GO" id="GO:0008270">
    <property type="term" value="F:zinc ion binding"/>
    <property type="evidence" value="ECO:0007669"/>
    <property type="project" value="UniProtKB-UniRule"/>
</dbReference>
<dbReference type="GO" id="GO:0000105">
    <property type="term" value="P:L-histidine biosynthetic process"/>
    <property type="evidence" value="ECO:0007669"/>
    <property type="project" value="UniProtKB-UniRule"/>
</dbReference>
<dbReference type="FunFam" id="3.10.20.810:FF:000001">
    <property type="entry name" value="Histidine biosynthesis bifunctional protein HisIE"/>
    <property type="match status" value="1"/>
</dbReference>
<dbReference type="Gene3D" id="3.10.20.810">
    <property type="entry name" value="Phosphoribosyl-AMP cyclohydrolase"/>
    <property type="match status" value="1"/>
</dbReference>
<dbReference type="HAMAP" id="MF_01021">
    <property type="entry name" value="HisI"/>
    <property type="match status" value="1"/>
</dbReference>
<dbReference type="InterPro" id="IPR026660">
    <property type="entry name" value="PRA-CH"/>
</dbReference>
<dbReference type="InterPro" id="IPR002496">
    <property type="entry name" value="PRib_AMP_CycHydrolase_dom"/>
</dbReference>
<dbReference type="InterPro" id="IPR038019">
    <property type="entry name" value="PRib_AMP_CycHydrolase_sf"/>
</dbReference>
<dbReference type="NCBIfam" id="NF000768">
    <property type="entry name" value="PRK00051.1"/>
    <property type="match status" value="1"/>
</dbReference>
<dbReference type="PANTHER" id="PTHR42945">
    <property type="entry name" value="HISTIDINE BIOSYNTHESIS BIFUNCTIONAL PROTEIN"/>
    <property type="match status" value="1"/>
</dbReference>
<dbReference type="PANTHER" id="PTHR42945:SF1">
    <property type="entry name" value="HISTIDINE BIOSYNTHESIS BIFUNCTIONAL PROTEIN HIS7"/>
    <property type="match status" value="1"/>
</dbReference>
<dbReference type="Pfam" id="PF01502">
    <property type="entry name" value="PRA-CH"/>
    <property type="match status" value="1"/>
</dbReference>
<dbReference type="SUPFAM" id="SSF141734">
    <property type="entry name" value="HisI-like"/>
    <property type="match status" value="1"/>
</dbReference>
<organism>
    <name type="scientific">Rhodopseudomonas palustris (strain ATCC BAA-98 / CGA009)</name>
    <dbReference type="NCBI Taxonomy" id="258594"/>
    <lineage>
        <taxon>Bacteria</taxon>
        <taxon>Pseudomonadati</taxon>
        <taxon>Pseudomonadota</taxon>
        <taxon>Alphaproteobacteria</taxon>
        <taxon>Hyphomicrobiales</taxon>
        <taxon>Nitrobacteraceae</taxon>
        <taxon>Rhodopseudomonas</taxon>
    </lineage>
</organism>
<keyword id="KW-0028">Amino-acid biosynthesis</keyword>
<keyword id="KW-0963">Cytoplasm</keyword>
<keyword id="KW-0368">Histidine biosynthesis</keyword>
<keyword id="KW-0378">Hydrolase</keyword>
<keyword id="KW-0460">Magnesium</keyword>
<keyword id="KW-0479">Metal-binding</keyword>
<keyword id="KW-0862">Zinc</keyword>
<accession>P60544</accession>
<reference key="1">
    <citation type="journal article" date="2004" name="Nat. Biotechnol.">
        <title>Complete genome sequence of the metabolically versatile photosynthetic bacterium Rhodopseudomonas palustris.</title>
        <authorList>
            <person name="Larimer F.W."/>
            <person name="Chain P."/>
            <person name="Hauser L."/>
            <person name="Lamerdin J.E."/>
            <person name="Malfatti S."/>
            <person name="Do L."/>
            <person name="Land M.L."/>
            <person name="Pelletier D.A."/>
            <person name="Beatty J.T."/>
            <person name="Lang A.S."/>
            <person name="Tabita F.R."/>
            <person name="Gibson J.L."/>
            <person name="Hanson T.E."/>
            <person name="Bobst C."/>
            <person name="Torres y Torres J.L."/>
            <person name="Peres C."/>
            <person name="Harrison F.H."/>
            <person name="Gibson J."/>
            <person name="Harwood C.S."/>
        </authorList>
    </citation>
    <scope>NUCLEOTIDE SEQUENCE [LARGE SCALE GENOMIC DNA]</scope>
    <source>
        <strain>ATCC BAA-98 / CGA009</strain>
    </source>
</reference>
<evidence type="ECO:0000255" key="1">
    <source>
        <dbReference type="HAMAP-Rule" id="MF_01021"/>
    </source>
</evidence>
<gene>
    <name evidence="1" type="primary">hisI</name>
    <name type="synonym">his3</name>
    <name type="ordered locus">RPA3390</name>
</gene>
<sequence length="151" mass="16764">MSSESRSASSPVAPDDIEEGVVLRPKFDAHGLVTVVATDARTGDVLMVAFMNGEALDRTIQTGEAWYYSRSRKRLWKKGETSGHIQKVLEMRVDCDQDAVWIKVDQTGGAACHTGRHSCFYRRIDRGGDGAPVLIETDSERKFDPDKVYGK</sequence>